<name>HSOP_PLAF7</name>
<reference key="1">
    <citation type="journal article" date="2002" name="Nature">
        <title>Genome sequence of the human malaria parasite Plasmodium falciparum.</title>
        <authorList>
            <person name="Gardner M.J."/>
            <person name="Hall N."/>
            <person name="Fung E."/>
            <person name="White O."/>
            <person name="Berriman M."/>
            <person name="Hyman R.W."/>
            <person name="Carlton J.M."/>
            <person name="Pain A."/>
            <person name="Nelson K.E."/>
            <person name="Bowman S."/>
            <person name="Paulsen I.T."/>
            <person name="James K.D."/>
            <person name="Eisen J.A."/>
            <person name="Rutherford K.M."/>
            <person name="Salzberg S.L."/>
            <person name="Craig A."/>
            <person name="Kyes S."/>
            <person name="Chan M.-S."/>
            <person name="Nene V."/>
            <person name="Shallom S.J."/>
            <person name="Suh B."/>
            <person name="Peterson J."/>
            <person name="Angiuoli S."/>
            <person name="Pertea M."/>
            <person name="Allen J."/>
            <person name="Selengut J."/>
            <person name="Haft D."/>
            <person name="Mather M.W."/>
            <person name="Vaidya A.B."/>
            <person name="Martin D.M.A."/>
            <person name="Fairlamb A.H."/>
            <person name="Fraunholz M.J."/>
            <person name="Roos D.S."/>
            <person name="Ralph S.A."/>
            <person name="McFadden G.I."/>
            <person name="Cummings L.M."/>
            <person name="Subramanian G.M."/>
            <person name="Mungall C."/>
            <person name="Venter J.C."/>
            <person name="Carucci D.J."/>
            <person name="Hoffman S.L."/>
            <person name="Newbold C."/>
            <person name="Davis R.W."/>
            <person name="Fraser C.M."/>
            <person name="Barrell B.G."/>
        </authorList>
    </citation>
    <scope>NUCLEOTIDE SEQUENCE [LARGE SCALE GENOMIC DNA]</scope>
    <source>
        <strain>3D7</strain>
    </source>
</reference>
<reference key="2">
    <citation type="journal article" date="2012" name="Cell Stress Chaperones">
        <title>Characterisation of the Plasmodium falciparum Hsp70-Hsp90 organising protein (PfHop).</title>
        <authorList>
            <person name="Gitau G.W."/>
            <person name="Mandal P."/>
            <person name="Blatch G.L."/>
            <person name="Przyborski J."/>
            <person name="Shonhai A."/>
        </authorList>
    </citation>
    <scope>FUNCTION</scope>
    <scope>IDENTIFICATION IN A COMPLEX WITH HSP70 AND HSP90</scope>
    <scope>SUBCELLULAR LOCATION</scope>
    <scope>DEVELOPMENTAL STAGE</scope>
</reference>
<reference key="3">
    <citation type="journal article" date="2015" name="PLoS ONE">
        <title>Plasmodium falciparum Hop (PfHop) Interacts with the Hsp70 Chaperone in a Nucleotide-Dependent Fashion and Exhibits Ligand Selectivity.</title>
        <authorList>
            <person name="Zininga T."/>
            <person name="Makumire S."/>
            <person name="Gitau G.W."/>
            <person name="Njunge J.M."/>
            <person name="Pooe O.J."/>
            <person name="Klimek H."/>
            <person name="Scheurr R."/>
            <person name="Raifer H."/>
            <person name="Prinsloo E."/>
            <person name="Przyborski J.M."/>
            <person name="Hoppe H."/>
            <person name="Shonhai A."/>
        </authorList>
    </citation>
    <scope>FUNCTION</scope>
    <scope>SUBUNIT</scope>
    <scope>INTERACTION WITH HSP70 AND HSP90</scope>
    <scope>INDUCTION</scope>
</reference>
<reference key="4">
    <citation type="journal article" date="2020" name="Biochim. Biophys. Acta">
        <title>Structural studies of the Hsp70/Hsp90 organizing protein of Plasmodium falciparum and its modulation of Hsp70 and Hsp90 ATPase activities.</title>
        <authorList>
            <person name="Silva N.S.M."/>
            <person name="Bertolino-Reis D.E."/>
            <person name="Dores-Silva P.R."/>
            <person name="Anneta F.B."/>
            <person name="Seraphim T.V."/>
            <person name="Barbosa L.R.S."/>
            <person name="Borges J.C."/>
        </authorList>
    </citation>
    <scope>FUNCTION</scope>
    <scope>SUBUNIT</scope>
</reference>
<reference key="5">
    <citation type="journal article" date="2020" name="PLoS ONE">
        <title>Biophysical analysis of Plasmodium falciparum Hsp70-Hsp90 organising protein (PfHop) reveals a monomer that is characterised by folded segments connected by flexible linkers.</title>
        <authorList>
            <person name="Makumire S."/>
            <person name="Zininga T."/>
            <person name="Vahokoski J."/>
            <person name="Kursula I."/>
            <person name="Shonhai A."/>
        </authorList>
    </citation>
    <scope>SUBUNIT</scope>
</reference>
<proteinExistence type="evidence at protein level"/>
<keyword id="KW-0143">Chaperone</keyword>
<keyword id="KW-0175">Coiled coil</keyword>
<keyword id="KW-0963">Cytoplasm</keyword>
<keyword id="KW-1185">Reference proteome</keyword>
<keyword id="KW-0677">Repeat</keyword>
<keyword id="KW-0802">TPR repeat</keyword>
<gene>
    <name evidence="7" type="primary">HOP</name>
    <name evidence="8" type="synonym">STI1</name>
    <name type="ORF">PF14_0324</name>
    <name type="ORF">PF3D7_1434300</name>
</gene>
<accession>Q8ILC1</accession>
<accession>A0A144A2J9</accession>
<sequence length="564" mass="66057">MVNKEEAQRLKELGNKCFQEGKYEEAVKYFSDAITNDPLDHVLYSNLSGAFASLGRFYEALESANKCISIKKDWPKGYIRKGCAEHGLRQLSNAEKTYLEGLKIDPNNKSLQDALSKVRNENMLENAQLIAHLNNIIENDPQLKSYKEENSNYPHELLNTIKSINSNPMNIRIILSTCHPKISEGVEKFFGFKFTGEGNDAEERQRQQREEEERRKKKEEEERKKKEEEEMKKQNRTPEQIQGDEHKLKGNEFYKQKKFDEALKEYEEAIQINPNDIMYHYNKAAVHIEMKNYDKAVETCLYAIENRYNFKAEFIQVAKLYNRLAISYINMKKYDLAIEAYRKSLVEDNNRATRNALKELERRKEKEEKEAYIDPDKAEEHKNKGNEYFKNNDFPNAKKEYDEAIRRNPNDAKLYSNRAAALTKLIEYPSALEDVMKAIELDPTFVKAYSRKGNLHFFMKDYYKALQAYNKGLELDPNNKECLEGYQRCAFKIDEMSKSEKVDEEQFKKSMADPEIQQIISDPQFQIILQKLNENPNSISEYIKDPKIFNGLQKLIAAGILKVR</sequence>
<organism>
    <name type="scientific">Plasmodium falciparum (isolate 3D7)</name>
    <dbReference type="NCBI Taxonomy" id="36329"/>
    <lineage>
        <taxon>Eukaryota</taxon>
        <taxon>Sar</taxon>
        <taxon>Alveolata</taxon>
        <taxon>Apicomplexa</taxon>
        <taxon>Aconoidasida</taxon>
        <taxon>Haemosporida</taxon>
        <taxon>Plasmodiidae</taxon>
        <taxon>Plasmodium</taxon>
        <taxon>Plasmodium (Laverania)</taxon>
    </lineage>
</organism>
<dbReference type="EMBL" id="LN999946">
    <property type="protein sequence ID" value="CZU00040.1"/>
    <property type="molecule type" value="Genomic_DNA"/>
</dbReference>
<dbReference type="RefSeq" id="XP_001348498.1">
    <property type="nucleotide sequence ID" value="XM_001348462.1"/>
</dbReference>
<dbReference type="SASBDB" id="Q8ILC1"/>
<dbReference type="SMR" id="Q8ILC1"/>
<dbReference type="BioGRID" id="1207264">
    <property type="interactions" value="5"/>
</dbReference>
<dbReference type="IntAct" id="Q8ILC1">
    <property type="interactions" value="4"/>
</dbReference>
<dbReference type="STRING" id="36329.Q8ILC1"/>
<dbReference type="PaxDb" id="5833-PF14_0324"/>
<dbReference type="EnsemblProtists" id="CZU00040">
    <property type="protein sequence ID" value="CZU00040"/>
    <property type="gene ID" value="PF3D7_1434300"/>
</dbReference>
<dbReference type="GeneID" id="811906"/>
<dbReference type="KEGG" id="pfa:PF3D7_1434300"/>
<dbReference type="VEuPathDB" id="PlasmoDB:PF3D7_1434300"/>
<dbReference type="HOGENOM" id="CLU_000134_46_5_1"/>
<dbReference type="OMA" id="MYSAREN"/>
<dbReference type="OrthoDB" id="2423701at2759"/>
<dbReference type="PhylomeDB" id="Q8ILC1"/>
<dbReference type="Reactome" id="R-PFA-3371497">
    <property type="pathway name" value="HSP90 chaperone cycle for steroid hormone receptors (SHR) in the presence of ligand"/>
</dbReference>
<dbReference type="Proteomes" id="UP000001450">
    <property type="component" value="Chromosome 14"/>
</dbReference>
<dbReference type="GO" id="GO:0005829">
    <property type="term" value="C:cytosol"/>
    <property type="evidence" value="ECO:0000314"/>
    <property type="project" value="GeneDB"/>
</dbReference>
<dbReference type="GO" id="GO:0101031">
    <property type="term" value="C:protein folding chaperone complex"/>
    <property type="evidence" value="ECO:0000314"/>
    <property type="project" value="UniProtKB"/>
</dbReference>
<dbReference type="GO" id="GO:0030544">
    <property type="term" value="F:Hsp70 protein binding"/>
    <property type="evidence" value="ECO:0000314"/>
    <property type="project" value="UniProtKB"/>
</dbReference>
<dbReference type="GO" id="GO:0051879">
    <property type="term" value="F:Hsp90 protein binding"/>
    <property type="evidence" value="ECO:0000314"/>
    <property type="project" value="UniProtKB"/>
</dbReference>
<dbReference type="FunFam" id="1.25.40.10:FF:000210">
    <property type="entry name" value="Hsp70/Hsp90 organizing protein"/>
    <property type="match status" value="1"/>
</dbReference>
<dbReference type="FunFam" id="1.25.40.10:FF:000572">
    <property type="entry name" value="Hsp70/Hsp90 organizing protein"/>
    <property type="match status" value="1"/>
</dbReference>
<dbReference type="FunFam" id="1.25.40.10:FF:000020">
    <property type="entry name" value="Stress-induced phosphoprotein 1"/>
    <property type="match status" value="1"/>
</dbReference>
<dbReference type="FunFam" id="1.10.260.100:FF:000002">
    <property type="entry name" value="Stress-induced-phosphoprotein 1 (Hsp70/Hsp90-organizing)"/>
    <property type="match status" value="1"/>
</dbReference>
<dbReference type="Gene3D" id="1.10.260.100">
    <property type="match status" value="1"/>
</dbReference>
<dbReference type="Gene3D" id="1.25.40.10">
    <property type="entry name" value="Tetratricopeptide repeat domain"/>
    <property type="match status" value="3"/>
</dbReference>
<dbReference type="InterPro" id="IPR041243">
    <property type="entry name" value="STI1/HOP_DP"/>
</dbReference>
<dbReference type="InterPro" id="IPR006636">
    <property type="entry name" value="STI1_HS-bd"/>
</dbReference>
<dbReference type="InterPro" id="IPR011990">
    <property type="entry name" value="TPR-like_helical_dom_sf"/>
</dbReference>
<dbReference type="InterPro" id="IPR013105">
    <property type="entry name" value="TPR_2"/>
</dbReference>
<dbReference type="InterPro" id="IPR019734">
    <property type="entry name" value="TPR_rpt"/>
</dbReference>
<dbReference type="PANTHER" id="PTHR22904:SF523">
    <property type="entry name" value="STRESS-INDUCED-PHOSPHOPROTEIN 1"/>
    <property type="match status" value="1"/>
</dbReference>
<dbReference type="PANTHER" id="PTHR22904">
    <property type="entry name" value="TPR REPEAT CONTAINING PROTEIN"/>
    <property type="match status" value="1"/>
</dbReference>
<dbReference type="Pfam" id="PF17830">
    <property type="entry name" value="STI1-HOP_DP"/>
    <property type="match status" value="1"/>
</dbReference>
<dbReference type="Pfam" id="PF00515">
    <property type="entry name" value="TPR_1"/>
    <property type="match status" value="1"/>
</dbReference>
<dbReference type="Pfam" id="PF13414">
    <property type="entry name" value="TPR_11"/>
    <property type="match status" value="2"/>
</dbReference>
<dbReference type="Pfam" id="PF13432">
    <property type="entry name" value="TPR_16"/>
    <property type="match status" value="1"/>
</dbReference>
<dbReference type="Pfam" id="PF07719">
    <property type="entry name" value="TPR_2"/>
    <property type="match status" value="1"/>
</dbReference>
<dbReference type="Pfam" id="PF13181">
    <property type="entry name" value="TPR_8"/>
    <property type="match status" value="1"/>
</dbReference>
<dbReference type="SMART" id="SM00727">
    <property type="entry name" value="STI1"/>
    <property type="match status" value="1"/>
</dbReference>
<dbReference type="SMART" id="SM00028">
    <property type="entry name" value="TPR"/>
    <property type="match status" value="9"/>
</dbReference>
<dbReference type="SUPFAM" id="SSF48452">
    <property type="entry name" value="TPR-like"/>
    <property type="match status" value="3"/>
</dbReference>
<dbReference type="PROSITE" id="PS50005">
    <property type="entry name" value="TPR"/>
    <property type="match status" value="8"/>
</dbReference>
<dbReference type="PROSITE" id="PS50293">
    <property type="entry name" value="TPR_REGION"/>
    <property type="match status" value="2"/>
</dbReference>
<feature type="chain" id="PRO_0000295632" description="Hsp70-Hsp90 organising protein">
    <location>
        <begin position="1"/>
        <end position="564"/>
    </location>
</feature>
<feature type="repeat" description="TPR 1" evidence="1">
    <location>
        <begin position="7"/>
        <end position="40"/>
    </location>
</feature>
<feature type="repeat" description="TPR 2" evidence="1">
    <location>
        <begin position="42"/>
        <end position="74"/>
    </location>
</feature>
<feature type="repeat" description="TPR 3" evidence="1">
    <location>
        <begin position="76"/>
        <end position="108"/>
    </location>
</feature>
<feature type="repeat" description="TPR 4" evidence="1">
    <location>
        <begin position="243"/>
        <end position="276"/>
    </location>
</feature>
<feature type="repeat" description="TPR 5" evidence="1">
    <location>
        <begin position="278"/>
        <end position="310"/>
    </location>
</feature>
<feature type="repeat" description="TPR 6" evidence="1">
    <location>
        <begin position="318"/>
        <end position="351"/>
    </location>
</feature>
<feature type="repeat" description="TPR 7" evidence="1">
    <location>
        <begin position="378"/>
        <end position="411"/>
    </location>
</feature>
<feature type="repeat" description="TPR 8" evidence="1">
    <location>
        <begin position="413"/>
        <end position="445"/>
    </location>
</feature>
<feature type="repeat" description="TPR 9" evidence="1">
    <location>
        <begin position="446"/>
        <end position="479"/>
    </location>
</feature>
<feature type="domain" description="STI1" evidence="1">
    <location>
        <begin position="513"/>
        <end position="552"/>
    </location>
</feature>
<feature type="region of interest" description="Disordered" evidence="2">
    <location>
        <begin position="199"/>
        <end position="247"/>
    </location>
</feature>
<feature type="coiled-coil region" evidence="1">
    <location>
        <begin position="197"/>
        <end position="239"/>
    </location>
</feature>
<feature type="compositionally biased region" description="Basic and acidic residues" evidence="2">
    <location>
        <begin position="201"/>
        <end position="233"/>
    </location>
</feature>
<comment type="function">
    <text evidence="3 4 5">Acts as a co-chaperone and mediates the association of the chaperones HSP70 and HSP90 probably facilitating substrate transfer from HSP70 to HSP90 (PubMed:22005844, PubMed:26267894). Stimulates HSP70 ATPase activity and, in contrast, inhibits HSP90 ATPase activity (PubMed:31525467).</text>
</comment>
<comment type="subunit">
    <text evidence="3 4 5 6">Monomer (PubMed:32343703). Homodimer (PubMed:26267894, PubMed:31525467). Forms a complex composed of HOP and chaperones HSP70 and HSP90; the interaction is stronger in the absence of ATP (PubMed:22005844). Interacts (via TPR 1, 2, 3, 7, 8 and 9 repeats) with HSP70 (via C-terminus); the interaction is direct and is stronger in the absence of ATP (PubMed:26267894). Interacts (via TPR 4, 5 and 6 repeats) with HSP90 (via C-terminus); the interaction is direct (PubMed:26267894).</text>
</comment>
<comment type="subcellular location">
    <subcellularLocation>
        <location evidence="3">Cytoplasm</location>
    </subcellularLocation>
</comment>
<comment type="developmental stage">
    <text evidence="3">Expressed during the parasite blood stage, in trophozoites (at protein level).</text>
</comment>
<comment type="induction">
    <text evidence="4">By heat stress (at protein level).</text>
</comment>
<comment type="domain">
    <text evidence="7">The TPR repeats form 3 domains; the TPR 1 domain is composed of TPR 1, 2 and 3 repeats, the TPR2A domain of TPR 4, 5 and 6 repeats and TPR2B domain of TPR 7, 8 and 9 repeats.</text>
</comment>
<comment type="caution">
    <text evidence="4 5 6">Showed to form heterodimers (PubMed:26267894, PubMed:31525467). However in a later study, showed to exist predominantly as a monomer (PubMed:32343703).</text>
</comment>
<protein>
    <recommendedName>
        <fullName evidence="7">Hsp70-Hsp90 organising protein</fullName>
        <shortName evidence="7">PfHOP</shortName>
    </recommendedName>
    <alternativeName>
        <fullName evidence="8">Stress-inducible protein 1</fullName>
    </alternativeName>
</protein>
<evidence type="ECO:0000255" key="1"/>
<evidence type="ECO:0000256" key="2">
    <source>
        <dbReference type="SAM" id="MobiDB-lite"/>
    </source>
</evidence>
<evidence type="ECO:0000269" key="3">
    <source>
    </source>
</evidence>
<evidence type="ECO:0000269" key="4">
    <source>
    </source>
</evidence>
<evidence type="ECO:0000269" key="5">
    <source>
    </source>
</evidence>
<evidence type="ECO:0000269" key="6">
    <source>
    </source>
</evidence>
<evidence type="ECO:0000303" key="7">
    <source>
    </source>
</evidence>
<evidence type="ECO:0000303" key="8">
    <source>
    </source>
</evidence>